<evidence type="ECO:0000255" key="1">
    <source>
        <dbReference type="HAMAP-Rule" id="MF_00034"/>
    </source>
</evidence>
<gene>
    <name evidence="1" type="primary">ruvC</name>
    <name type="ordered locus">MAV_3475</name>
</gene>
<name>RUVC_MYCA1</name>
<sequence>MRVMGVDPGLTRCGLSVVESGRGRTVVALDVDVVRTPSDAPLAERLLSISDAVEHWLATHQPDVVAIERVFSQLNVTTVMGTAQAGGVVALAAAKRGIGVHFHTPSEVKAAVTGNGAANKAQVTAMVTRILALQAKPTPADAADALALAICHCWRAPMIARMARAEALAAQQRQKYKDKVDATLRAAR</sequence>
<keyword id="KW-0963">Cytoplasm</keyword>
<keyword id="KW-0227">DNA damage</keyword>
<keyword id="KW-0233">DNA recombination</keyword>
<keyword id="KW-0234">DNA repair</keyword>
<keyword id="KW-0238">DNA-binding</keyword>
<keyword id="KW-0255">Endonuclease</keyword>
<keyword id="KW-0378">Hydrolase</keyword>
<keyword id="KW-0460">Magnesium</keyword>
<keyword id="KW-0479">Metal-binding</keyword>
<keyword id="KW-0540">Nuclease</keyword>
<comment type="function">
    <text evidence="1">The RuvA-RuvB-RuvC complex processes Holliday junction (HJ) DNA during genetic recombination and DNA repair. Endonuclease that resolves HJ intermediates. Cleaves cruciform DNA by making single-stranded nicks across the HJ at symmetrical positions within the homologous arms, yielding a 5'-phosphate and a 3'-hydroxyl group; requires a central core of homology in the junction. The consensus cleavage sequence is 5'-(A/T)TT(C/G)-3'. Cleavage occurs on the 3'-side of the TT dinucleotide at the point of strand exchange. HJ branch migration catalyzed by RuvA-RuvB allows RuvC to scan DNA until it finds its consensus sequence, where it cleaves and resolves the cruciform DNA.</text>
</comment>
<comment type="catalytic activity">
    <reaction evidence="1">
        <text>Endonucleolytic cleavage at a junction such as a reciprocal single-stranded crossover between two homologous DNA duplexes (Holliday junction).</text>
        <dbReference type="EC" id="3.1.21.10"/>
    </reaction>
</comment>
<comment type="cofactor">
    <cofactor evidence="1">
        <name>Mg(2+)</name>
        <dbReference type="ChEBI" id="CHEBI:18420"/>
    </cofactor>
    <text evidence="1">Binds 2 Mg(2+) ion per subunit.</text>
</comment>
<comment type="subunit">
    <text evidence="1">Homodimer which binds Holliday junction (HJ) DNA. The HJ becomes 2-fold symmetrical on binding to RuvC with unstacked arms; it has a different conformation from HJ DNA in complex with RuvA. In the full resolvosome a probable DNA-RuvA(4)-RuvB(12)-RuvC(2) complex forms which resolves the HJ.</text>
</comment>
<comment type="subcellular location">
    <subcellularLocation>
        <location evidence="1">Cytoplasm</location>
    </subcellularLocation>
</comment>
<comment type="similarity">
    <text evidence="1">Belongs to the RuvC family.</text>
</comment>
<organism>
    <name type="scientific">Mycobacterium avium (strain 104)</name>
    <dbReference type="NCBI Taxonomy" id="243243"/>
    <lineage>
        <taxon>Bacteria</taxon>
        <taxon>Bacillati</taxon>
        <taxon>Actinomycetota</taxon>
        <taxon>Actinomycetes</taxon>
        <taxon>Mycobacteriales</taxon>
        <taxon>Mycobacteriaceae</taxon>
        <taxon>Mycobacterium</taxon>
        <taxon>Mycobacterium avium complex (MAC)</taxon>
    </lineage>
</organism>
<dbReference type="EC" id="3.1.21.10" evidence="1"/>
<dbReference type="EMBL" id="CP000479">
    <property type="protein sequence ID" value="ABK66342.1"/>
    <property type="molecule type" value="Genomic_DNA"/>
</dbReference>
<dbReference type="RefSeq" id="WP_003877574.1">
    <property type="nucleotide sequence ID" value="NC_008595.1"/>
</dbReference>
<dbReference type="SMR" id="A0QIB9"/>
<dbReference type="GeneID" id="75270871"/>
<dbReference type="KEGG" id="mav:MAV_3475"/>
<dbReference type="HOGENOM" id="CLU_091257_0_2_11"/>
<dbReference type="Proteomes" id="UP000001574">
    <property type="component" value="Chromosome"/>
</dbReference>
<dbReference type="GO" id="GO:0005737">
    <property type="term" value="C:cytoplasm"/>
    <property type="evidence" value="ECO:0007669"/>
    <property type="project" value="UniProtKB-SubCell"/>
</dbReference>
<dbReference type="GO" id="GO:0048476">
    <property type="term" value="C:Holliday junction resolvase complex"/>
    <property type="evidence" value="ECO:0007669"/>
    <property type="project" value="UniProtKB-UniRule"/>
</dbReference>
<dbReference type="GO" id="GO:0008821">
    <property type="term" value="F:crossover junction DNA endonuclease activity"/>
    <property type="evidence" value="ECO:0007669"/>
    <property type="project" value="UniProtKB-UniRule"/>
</dbReference>
<dbReference type="GO" id="GO:0003677">
    <property type="term" value="F:DNA binding"/>
    <property type="evidence" value="ECO:0007669"/>
    <property type="project" value="UniProtKB-KW"/>
</dbReference>
<dbReference type="GO" id="GO:0000287">
    <property type="term" value="F:magnesium ion binding"/>
    <property type="evidence" value="ECO:0007669"/>
    <property type="project" value="UniProtKB-UniRule"/>
</dbReference>
<dbReference type="GO" id="GO:0006310">
    <property type="term" value="P:DNA recombination"/>
    <property type="evidence" value="ECO:0007669"/>
    <property type="project" value="UniProtKB-UniRule"/>
</dbReference>
<dbReference type="GO" id="GO:0006281">
    <property type="term" value="P:DNA repair"/>
    <property type="evidence" value="ECO:0007669"/>
    <property type="project" value="UniProtKB-UniRule"/>
</dbReference>
<dbReference type="CDD" id="cd16962">
    <property type="entry name" value="RuvC"/>
    <property type="match status" value="1"/>
</dbReference>
<dbReference type="FunFam" id="3.30.420.10:FF:000002">
    <property type="entry name" value="Crossover junction endodeoxyribonuclease RuvC"/>
    <property type="match status" value="1"/>
</dbReference>
<dbReference type="Gene3D" id="3.30.420.10">
    <property type="entry name" value="Ribonuclease H-like superfamily/Ribonuclease H"/>
    <property type="match status" value="1"/>
</dbReference>
<dbReference type="HAMAP" id="MF_00034">
    <property type="entry name" value="RuvC"/>
    <property type="match status" value="1"/>
</dbReference>
<dbReference type="InterPro" id="IPR012337">
    <property type="entry name" value="RNaseH-like_sf"/>
</dbReference>
<dbReference type="InterPro" id="IPR036397">
    <property type="entry name" value="RNaseH_sf"/>
</dbReference>
<dbReference type="InterPro" id="IPR020563">
    <property type="entry name" value="X-over_junc_endoDNase_Mg_BS"/>
</dbReference>
<dbReference type="InterPro" id="IPR002176">
    <property type="entry name" value="X-over_junc_endoDNase_RuvC"/>
</dbReference>
<dbReference type="NCBIfam" id="TIGR00228">
    <property type="entry name" value="ruvC"/>
    <property type="match status" value="1"/>
</dbReference>
<dbReference type="PANTHER" id="PTHR30194">
    <property type="entry name" value="CROSSOVER JUNCTION ENDODEOXYRIBONUCLEASE RUVC"/>
    <property type="match status" value="1"/>
</dbReference>
<dbReference type="PANTHER" id="PTHR30194:SF3">
    <property type="entry name" value="CROSSOVER JUNCTION ENDODEOXYRIBONUCLEASE RUVC"/>
    <property type="match status" value="1"/>
</dbReference>
<dbReference type="Pfam" id="PF02075">
    <property type="entry name" value="RuvC"/>
    <property type="match status" value="1"/>
</dbReference>
<dbReference type="PRINTS" id="PR00696">
    <property type="entry name" value="RSOLVASERUVC"/>
</dbReference>
<dbReference type="SUPFAM" id="SSF53098">
    <property type="entry name" value="Ribonuclease H-like"/>
    <property type="match status" value="1"/>
</dbReference>
<dbReference type="PROSITE" id="PS01321">
    <property type="entry name" value="RUVC"/>
    <property type="match status" value="1"/>
</dbReference>
<feature type="chain" id="PRO_1000002777" description="Crossover junction endodeoxyribonuclease RuvC">
    <location>
        <begin position="1"/>
        <end position="188"/>
    </location>
</feature>
<feature type="active site" evidence="1">
    <location>
        <position position="7"/>
    </location>
</feature>
<feature type="active site" evidence="1">
    <location>
        <position position="68"/>
    </location>
</feature>
<feature type="active site" evidence="1">
    <location>
        <position position="141"/>
    </location>
</feature>
<feature type="binding site" evidence="1">
    <location>
        <position position="7"/>
    </location>
    <ligand>
        <name>Mg(2+)</name>
        <dbReference type="ChEBI" id="CHEBI:18420"/>
        <label>1</label>
    </ligand>
</feature>
<feature type="binding site" evidence="1">
    <location>
        <position position="68"/>
    </location>
    <ligand>
        <name>Mg(2+)</name>
        <dbReference type="ChEBI" id="CHEBI:18420"/>
        <label>2</label>
    </ligand>
</feature>
<feature type="binding site" evidence="1">
    <location>
        <position position="141"/>
    </location>
    <ligand>
        <name>Mg(2+)</name>
        <dbReference type="ChEBI" id="CHEBI:18420"/>
        <label>1</label>
    </ligand>
</feature>
<protein>
    <recommendedName>
        <fullName evidence="1">Crossover junction endodeoxyribonuclease RuvC</fullName>
        <ecNumber evidence="1">3.1.21.10</ecNumber>
    </recommendedName>
    <alternativeName>
        <fullName evidence="1">Holliday junction nuclease RuvC</fullName>
    </alternativeName>
    <alternativeName>
        <fullName evidence="1">Holliday junction resolvase RuvC</fullName>
    </alternativeName>
</protein>
<proteinExistence type="inferred from homology"/>
<reference key="1">
    <citation type="submission" date="2006-10" db="EMBL/GenBank/DDBJ databases">
        <authorList>
            <person name="Fleischmann R.D."/>
            <person name="Dodson R.J."/>
            <person name="Haft D.H."/>
            <person name="Merkel J.S."/>
            <person name="Nelson W.C."/>
            <person name="Fraser C.M."/>
        </authorList>
    </citation>
    <scope>NUCLEOTIDE SEQUENCE [LARGE SCALE GENOMIC DNA]</scope>
    <source>
        <strain>104</strain>
    </source>
</reference>
<accession>A0QIB9</accession>